<accession>Q4PKH3</accession>
<comment type="function">
    <text evidence="2 3">Slowly voltage-gated channel mediating the exchange of chloride ions against protons (By similarity). Functions as antiporter and contributes to the acidification of the lysosome lumen and may be involved in maintaining lysosomal pH (By similarity). The CLC channel family contains both chloride channels and proton-coupled anion transporters that exchange chloride or another anion for protons (By similarity). The presence of conserved gating glutamate residues is typical for family members that function as antiporters (By similarity).</text>
</comment>
<comment type="catalytic activity">
    <reaction evidence="4">
        <text>2 chloride(in) + H(+)(out) = 2 chloride(out) + H(+)(in)</text>
        <dbReference type="Rhea" id="RHEA:29567"/>
        <dbReference type="ChEBI" id="CHEBI:15378"/>
        <dbReference type="ChEBI" id="CHEBI:17996"/>
    </reaction>
</comment>
<comment type="subunit">
    <text evidence="1">Chloride channel 7 are heteromers of alpha (CLCN7) and beta (OSTM1) subunits.</text>
</comment>
<comment type="subcellular location">
    <subcellularLocation>
        <location evidence="1">Lysosome membrane</location>
        <topology evidence="1">Multi-pass membrane protein</topology>
    </subcellularLocation>
</comment>
<comment type="similarity">
    <text evidence="6">Belongs to the chloride channel (TC 2.A.49) family. ClC-7/CLCN7 subfamily.</text>
</comment>
<keyword id="KW-0050">Antiport</keyword>
<keyword id="KW-0067">ATP-binding</keyword>
<keyword id="KW-0129">CBS domain</keyword>
<keyword id="KW-0868">Chloride</keyword>
<keyword id="KW-0406">Ion transport</keyword>
<keyword id="KW-0458">Lysosome</keyword>
<keyword id="KW-0472">Membrane</keyword>
<keyword id="KW-0547">Nucleotide-binding</keyword>
<keyword id="KW-0597">Phosphoprotein</keyword>
<keyword id="KW-1185">Reference proteome</keyword>
<keyword id="KW-0677">Repeat</keyword>
<keyword id="KW-0812">Transmembrane</keyword>
<keyword id="KW-1133">Transmembrane helix</keyword>
<keyword id="KW-0813">Transport</keyword>
<feature type="chain" id="PRO_0000244028" description="H(+)/Cl(-) exchange transporter 7">
    <location>
        <begin position="1"/>
        <end position="809"/>
    </location>
</feature>
<feature type="topological domain" description="Cytoplasmic" evidence="1">
    <location>
        <begin position="1"/>
        <end position="130"/>
    </location>
</feature>
<feature type="transmembrane region" description="Helical" evidence="1">
    <location>
        <begin position="131"/>
        <end position="163"/>
    </location>
</feature>
<feature type="transmembrane region" description="Helical" evidence="1">
    <location>
        <begin position="178"/>
        <end position="201"/>
    </location>
</feature>
<feature type="intramembrane region" description="Helical" evidence="1">
    <location>
        <begin position="210"/>
        <end position="217"/>
    </location>
</feature>
<feature type="transmembrane region" description="Helical" evidence="1">
    <location>
        <begin position="227"/>
        <end position="245"/>
    </location>
</feature>
<feature type="transmembrane region" description="Helical" evidence="1">
    <location>
        <begin position="251"/>
        <end position="268"/>
    </location>
</feature>
<feature type="intramembrane region" description="Helical" evidence="1">
    <location>
        <begin position="292"/>
        <end position="304"/>
    </location>
</feature>
<feature type="intramembrane region" description="Helical" evidence="1">
    <location>
        <begin position="308"/>
        <end position="316"/>
    </location>
</feature>
<feature type="transmembrane region" description="Helical" evidence="1">
    <location>
        <begin position="326"/>
        <end position="345"/>
    </location>
</feature>
<feature type="transmembrane region" description="Helical" evidence="1">
    <location>
        <begin position="379"/>
        <end position="409"/>
    </location>
</feature>
<feature type="transmembrane region" description="Helical" evidence="1">
    <location>
        <begin position="414"/>
        <end position="436"/>
    </location>
</feature>
<feature type="transmembrane region" description="Helical" evidence="1">
    <location>
        <begin position="491"/>
        <end position="511"/>
    </location>
</feature>
<feature type="transmembrane region" description="Helical" evidence="1">
    <location>
        <begin position="516"/>
        <end position="539"/>
    </location>
</feature>
<feature type="intramembrane region" description="Helical" evidence="1">
    <location>
        <begin position="549"/>
        <end position="563"/>
    </location>
</feature>
<feature type="intramembrane region" description="Note=Loop between two helices" evidence="1">
    <location>
        <begin position="564"/>
        <end position="566"/>
    </location>
</feature>
<feature type="intramembrane region" description="Helical" evidence="1">
    <location>
        <begin position="567"/>
        <end position="578"/>
    </location>
</feature>
<feature type="intramembrane region" description="Note=Loop between two helices" evidence="1">
    <location>
        <begin position="579"/>
        <end position="582"/>
    </location>
</feature>
<feature type="transmembrane region" description="Helical" evidence="1">
    <location>
        <begin position="583"/>
        <end position="601"/>
    </location>
</feature>
<feature type="topological domain" description="Cytoplasmic" evidence="1">
    <location>
        <begin position="602"/>
        <end position="809"/>
    </location>
</feature>
<feature type="domain" description="CBS 1" evidence="5">
    <location>
        <begin position="635"/>
        <end position="699"/>
    </location>
</feature>
<feature type="domain" description="CBS 2" evidence="5">
    <location>
        <begin position="745"/>
        <end position="803"/>
    </location>
</feature>
<feature type="short sequence motif" description="Selectivity filter part_1" evidence="1">
    <location>
        <begin position="207"/>
        <end position="211"/>
    </location>
</feature>
<feature type="short sequence motif" description="Selectivity filter part_2" evidence="1">
    <location>
        <begin position="249"/>
        <end position="253"/>
    </location>
</feature>
<feature type="short sequence motif" description="Selectivity filter part_3" evidence="1">
    <location>
        <begin position="516"/>
        <end position="520"/>
    </location>
</feature>
<feature type="binding site" evidence="1">
    <location>
        <position position="208"/>
    </location>
    <ligand>
        <name>chloride</name>
        <dbReference type="ChEBI" id="CHEBI:17996"/>
    </ligand>
</feature>
<feature type="binding site" evidence="1">
    <location>
        <position position="518"/>
    </location>
    <ligand>
        <name>chloride</name>
        <dbReference type="ChEBI" id="CHEBI:17996"/>
    </ligand>
</feature>
<feature type="binding site" evidence="1">
    <location>
        <position position="606"/>
    </location>
    <ligand>
        <name>chloride</name>
        <dbReference type="ChEBI" id="CHEBI:17996"/>
    </ligand>
</feature>
<feature type="binding site" evidence="1">
    <location>
        <begin position="662"/>
        <end position="664"/>
    </location>
    <ligand>
        <name>ATP</name>
        <dbReference type="ChEBI" id="CHEBI:30616"/>
    </ligand>
</feature>
<feature type="binding site" evidence="1">
    <location>
        <begin position="787"/>
        <end position="790"/>
    </location>
    <ligand>
        <name>ATP</name>
        <dbReference type="ChEBI" id="CHEBI:30616"/>
    </ligand>
</feature>
<feature type="site" description="Mediates proton transfer from the outer aqueous phase to the interior of the protein; involved in linking H(+) and Cl(-) transport" evidence="1">
    <location>
        <position position="251"/>
    </location>
</feature>
<feature type="site" description="Mediates proton transfer from the protein to the inner aqueous phase" evidence="1">
    <location>
        <position position="318"/>
    </location>
</feature>
<feature type="modified residue" description="Phosphoserine" evidence="2">
    <location>
        <position position="9"/>
    </location>
</feature>
<feature type="modified residue" description="Phosphoserine" evidence="4">
    <location>
        <position position="64"/>
    </location>
</feature>
<feature type="modified residue" description="Phosphoserine" evidence="4">
    <location>
        <position position="805"/>
    </location>
</feature>
<sequence length="809" mass="88831">MANVSKKVSWSGRDLDDDEAAPLLRRAPRLGVPAGEAAPLLNGAGPAAARASPHSAFFRIGQLSSVELDDELLDPDMDPPHPFPREIPHNEKLLSLKYESLDYDNSENQLFLEEERRINHTAFRTVEIKRWVICAMVGILTGLVACFIDIVVEKLAGLKYRLVKDNIDRFTEHGGLSFSLLLWAALNAAFVLLGSTIVAFIEPVAAGSGIPQIKCFLNGVKIPHVVRLKTLVIKVSGVILSVVGGLAVGKEGPMIHSGSVIAAGISQGRSTSLKRDFKIFEYFRRDTEKRDFVSAGAAAGVSAAFGAPVGGVLFSLEEGASFWNQFLTWRIFFASMISTFTLNFVLSIYHGNAWDLSSPGLINFGRFDTETMVYVIHEIPIFIAMGVVGGILGAVFNALNYWLTMFRIRYVHRPCLQVVEATLVAAVTATAAFVLIYSSRDCQPLRGSSVSYPLQLFCADGEYNSMAVAFFNTPEKSVVSLFHDPPGSYNPMTLGLFTLVYFFLACWTYGLTVSAGVFIPSLLIGAAWGRLFGISLSYITGAAVWADPGKYALMGAAAQLGGIVRMTLSLTVIMMEATSSVTYGFPIMLVLMTAKIVGDVFIEGLYDMHIQLQSVPFLHWEAPVTSHSLTAREVMSTPVTCLRRREKVGVIVDVLSSTASNHNGFPVVEDADGTQPARLQGLILRSQLIVLLKHKVFVERSSMGLLRRRLRLKDFRDAYPRFPPIQSIHVSQDERECTMDLSEFMNPSPYTVPQEASLPRVFKLFRALGLRHLVVVDNCNQVVGLVTRKDLARYRLGKGGLEELSLAQT</sequence>
<dbReference type="EMBL" id="DQ073465">
    <property type="protein sequence ID" value="AAY82470.1"/>
    <property type="molecule type" value="mRNA"/>
</dbReference>
<dbReference type="RefSeq" id="NP_001020502.1">
    <property type="nucleotide sequence ID" value="NM_001025331.1"/>
</dbReference>
<dbReference type="SMR" id="Q4PKH3"/>
<dbReference type="FunCoup" id="Q4PKH3">
    <property type="interactions" value="1912"/>
</dbReference>
<dbReference type="STRING" id="9913.ENSBTAP00000021122"/>
<dbReference type="PaxDb" id="9913-ENSBTAP00000021122"/>
<dbReference type="GeneID" id="513545"/>
<dbReference type="KEGG" id="bta:513545"/>
<dbReference type="CTD" id="1186"/>
<dbReference type="VEuPathDB" id="HostDB:ENSBTAG00000015889"/>
<dbReference type="eggNOG" id="KOG0474">
    <property type="taxonomic scope" value="Eukaryota"/>
</dbReference>
<dbReference type="HOGENOM" id="CLU_003181_4_1_1"/>
<dbReference type="InParanoid" id="Q4PKH3"/>
<dbReference type="OMA" id="KCDHNGF"/>
<dbReference type="OrthoDB" id="428525at2759"/>
<dbReference type="TreeFam" id="TF313867"/>
<dbReference type="Reactome" id="R-BTA-2672351">
    <property type="pathway name" value="Stimuli-sensing channels"/>
</dbReference>
<dbReference type="Proteomes" id="UP000009136">
    <property type="component" value="Chromosome 25"/>
</dbReference>
<dbReference type="Bgee" id="ENSBTAG00000015889">
    <property type="expression patterns" value="Expressed in monocyte and 103 other cell types or tissues"/>
</dbReference>
<dbReference type="GO" id="GO:0043231">
    <property type="term" value="C:intracellular membrane-bounded organelle"/>
    <property type="evidence" value="ECO:0000318"/>
    <property type="project" value="GO_Central"/>
</dbReference>
<dbReference type="GO" id="GO:0005765">
    <property type="term" value="C:lysosomal membrane"/>
    <property type="evidence" value="ECO:0000318"/>
    <property type="project" value="GO_Central"/>
</dbReference>
<dbReference type="GO" id="GO:0005524">
    <property type="term" value="F:ATP binding"/>
    <property type="evidence" value="ECO:0007669"/>
    <property type="project" value="UniProtKB-KW"/>
</dbReference>
<dbReference type="GO" id="GO:0015108">
    <property type="term" value="F:chloride transmembrane transporter activity"/>
    <property type="evidence" value="ECO:0000318"/>
    <property type="project" value="GO_Central"/>
</dbReference>
<dbReference type="GO" id="GO:0062158">
    <property type="term" value="F:chloride:proton antiporter activity"/>
    <property type="evidence" value="ECO:0007669"/>
    <property type="project" value="InterPro"/>
</dbReference>
<dbReference type="CDD" id="cd04591">
    <property type="entry name" value="CBS_pair_voltage-gated_CLC_euk_bac"/>
    <property type="match status" value="1"/>
</dbReference>
<dbReference type="CDD" id="cd03685">
    <property type="entry name" value="ClC_6_like"/>
    <property type="match status" value="1"/>
</dbReference>
<dbReference type="FunFam" id="3.10.580.10:FF:000076">
    <property type="entry name" value="Chloride channel protein"/>
    <property type="match status" value="1"/>
</dbReference>
<dbReference type="Gene3D" id="3.10.580.10">
    <property type="entry name" value="CBS-domain"/>
    <property type="match status" value="1"/>
</dbReference>
<dbReference type="Gene3D" id="1.10.3080.10">
    <property type="entry name" value="Clc chloride channel"/>
    <property type="match status" value="1"/>
</dbReference>
<dbReference type="InterPro" id="IPR000644">
    <property type="entry name" value="CBS_dom"/>
</dbReference>
<dbReference type="InterPro" id="IPR046342">
    <property type="entry name" value="CBS_dom_sf"/>
</dbReference>
<dbReference type="InterPro" id="IPR002249">
    <property type="entry name" value="CIC-7"/>
</dbReference>
<dbReference type="InterPro" id="IPR051280">
    <property type="entry name" value="Cl-channel/antiporter"/>
</dbReference>
<dbReference type="InterPro" id="IPR014743">
    <property type="entry name" value="Cl-channel_core"/>
</dbReference>
<dbReference type="InterPro" id="IPR001807">
    <property type="entry name" value="ClC"/>
</dbReference>
<dbReference type="PANTHER" id="PTHR11689">
    <property type="entry name" value="CHLORIDE CHANNEL PROTEIN CLC FAMILY MEMBER"/>
    <property type="match status" value="1"/>
</dbReference>
<dbReference type="PANTHER" id="PTHR11689:SF136">
    <property type="entry name" value="H(+)_CL(-) EXCHANGE TRANSPORTER 7"/>
    <property type="match status" value="1"/>
</dbReference>
<dbReference type="Pfam" id="PF00571">
    <property type="entry name" value="CBS"/>
    <property type="match status" value="1"/>
</dbReference>
<dbReference type="Pfam" id="PF00654">
    <property type="entry name" value="Voltage_CLC"/>
    <property type="match status" value="1"/>
</dbReference>
<dbReference type="PRINTS" id="PR00762">
    <property type="entry name" value="CLCHANNEL"/>
</dbReference>
<dbReference type="PRINTS" id="PR01118">
    <property type="entry name" value="CLCHANNEL7"/>
</dbReference>
<dbReference type="SMART" id="SM00116">
    <property type="entry name" value="CBS"/>
    <property type="match status" value="2"/>
</dbReference>
<dbReference type="SUPFAM" id="SSF54631">
    <property type="entry name" value="CBS-domain pair"/>
    <property type="match status" value="1"/>
</dbReference>
<dbReference type="SUPFAM" id="SSF81340">
    <property type="entry name" value="Clc chloride channel"/>
    <property type="match status" value="1"/>
</dbReference>
<dbReference type="PROSITE" id="PS51371">
    <property type="entry name" value="CBS"/>
    <property type="match status" value="2"/>
</dbReference>
<reference key="1">
    <citation type="submission" date="2005-05" db="EMBL/GenBank/DDBJ databases">
        <title>Ion channels in ocular epithelia.</title>
        <authorList>
            <person name="Rae J.L."/>
        </authorList>
    </citation>
    <scope>NUCLEOTIDE SEQUENCE [MRNA]</scope>
    <source>
        <tissue>Lens epithelium</tissue>
    </source>
</reference>
<evidence type="ECO:0000250" key="1"/>
<evidence type="ECO:0000250" key="2">
    <source>
        <dbReference type="UniProtKB" id="O70496"/>
    </source>
</evidence>
<evidence type="ECO:0000250" key="3">
    <source>
        <dbReference type="UniProtKB" id="P35523"/>
    </source>
</evidence>
<evidence type="ECO:0000250" key="4">
    <source>
        <dbReference type="UniProtKB" id="P51798"/>
    </source>
</evidence>
<evidence type="ECO:0000255" key="5">
    <source>
        <dbReference type="PROSITE-ProRule" id="PRU00703"/>
    </source>
</evidence>
<evidence type="ECO:0000305" key="6"/>
<organism>
    <name type="scientific">Bos taurus</name>
    <name type="common">Bovine</name>
    <dbReference type="NCBI Taxonomy" id="9913"/>
    <lineage>
        <taxon>Eukaryota</taxon>
        <taxon>Metazoa</taxon>
        <taxon>Chordata</taxon>
        <taxon>Craniata</taxon>
        <taxon>Vertebrata</taxon>
        <taxon>Euteleostomi</taxon>
        <taxon>Mammalia</taxon>
        <taxon>Eutheria</taxon>
        <taxon>Laurasiatheria</taxon>
        <taxon>Artiodactyla</taxon>
        <taxon>Ruminantia</taxon>
        <taxon>Pecora</taxon>
        <taxon>Bovidae</taxon>
        <taxon>Bovinae</taxon>
        <taxon>Bos</taxon>
    </lineage>
</organism>
<proteinExistence type="evidence at transcript level"/>
<gene>
    <name type="primary">CLCN7</name>
</gene>
<protein>
    <recommendedName>
        <fullName>H(+)/Cl(-) exchange transporter 7</fullName>
    </recommendedName>
    <alternativeName>
        <fullName>Chloride channel 7 alpha subunit</fullName>
    </alternativeName>
    <alternativeName>
        <fullName>Chloride channel protein 7</fullName>
        <shortName>ClC-7</shortName>
    </alternativeName>
</protein>
<name>CLCN7_BOVIN</name>